<name>THIG_ECO8A</name>
<proteinExistence type="inferred from homology"/>
<sequence>MLRIADKTFDSHLFTGTGKFASSQLMVEAIRASGSQLVTLAMKRVDLRQHNDAILEPLIAAGVTLLPNTSGAKTAEEAIFAAHLAREALGTNWLKLEIHPDARWLLPDPIETLKAAETLVQQGFVVLPYCGADPVLCKRLEEVGCAAVMPLGAPIGSNQGLETRAMLEIIIQQATVPVVVDAGIGVPSHAAQALEMGADAVLVNTAIAVADDPVNMAKAFRLAVEAGLLARQSGPGSRSHFAHATSPLAGFLEASA</sequence>
<accession>B7M738</accession>
<reference key="1">
    <citation type="journal article" date="2009" name="PLoS Genet.">
        <title>Organised genome dynamics in the Escherichia coli species results in highly diverse adaptive paths.</title>
        <authorList>
            <person name="Touchon M."/>
            <person name="Hoede C."/>
            <person name="Tenaillon O."/>
            <person name="Barbe V."/>
            <person name="Baeriswyl S."/>
            <person name="Bidet P."/>
            <person name="Bingen E."/>
            <person name="Bonacorsi S."/>
            <person name="Bouchier C."/>
            <person name="Bouvet O."/>
            <person name="Calteau A."/>
            <person name="Chiapello H."/>
            <person name="Clermont O."/>
            <person name="Cruveiller S."/>
            <person name="Danchin A."/>
            <person name="Diard M."/>
            <person name="Dossat C."/>
            <person name="Karoui M.E."/>
            <person name="Frapy E."/>
            <person name="Garry L."/>
            <person name="Ghigo J.M."/>
            <person name="Gilles A.M."/>
            <person name="Johnson J."/>
            <person name="Le Bouguenec C."/>
            <person name="Lescat M."/>
            <person name="Mangenot S."/>
            <person name="Martinez-Jehanne V."/>
            <person name="Matic I."/>
            <person name="Nassif X."/>
            <person name="Oztas S."/>
            <person name="Petit M.A."/>
            <person name="Pichon C."/>
            <person name="Rouy Z."/>
            <person name="Ruf C.S."/>
            <person name="Schneider D."/>
            <person name="Tourret J."/>
            <person name="Vacherie B."/>
            <person name="Vallenet D."/>
            <person name="Medigue C."/>
            <person name="Rocha E.P.C."/>
            <person name="Denamur E."/>
        </authorList>
    </citation>
    <scope>NUCLEOTIDE SEQUENCE [LARGE SCALE GENOMIC DNA]</scope>
    <source>
        <strain>IAI1</strain>
    </source>
</reference>
<dbReference type="EC" id="2.8.1.10" evidence="1"/>
<dbReference type="EMBL" id="CU928160">
    <property type="protein sequence ID" value="CAR00964.1"/>
    <property type="molecule type" value="Genomic_DNA"/>
</dbReference>
<dbReference type="RefSeq" id="WP_000944102.1">
    <property type="nucleotide sequence ID" value="NC_011741.1"/>
</dbReference>
<dbReference type="SMR" id="B7M738"/>
<dbReference type="KEGG" id="ecr:ECIAI1_4205"/>
<dbReference type="HOGENOM" id="CLU_062233_1_0_6"/>
<dbReference type="UniPathway" id="UPA00060"/>
<dbReference type="GO" id="GO:0005737">
    <property type="term" value="C:cytoplasm"/>
    <property type="evidence" value="ECO:0007669"/>
    <property type="project" value="UniProtKB-SubCell"/>
</dbReference>
<dbReference type="GO" id="GO:1990107">
    <property type="term" value="F:thiazole synthase activity"/>
    <property type="evidence" value="ECO:0007669"/>
    <property type="project" value="UniProtKB-EC"/>
</dbReference>
<dbReference type="GO" id="GO:0009229">
    <property type="term" value="P:thiamine diphosphate biosynthetic process"/>
    <property type="evidence" value="ECO:0007669"/>
    <property type="project" value="UniProtKB-UniRule"/>
</dbReference>
<dbReference type="CDD" id="cd04728">
    <property type="entry name" value="ThiG"/>
    <property type="match status" value="1"/>
</dbReference>
<dbReference type="FunFam" id="3.20.20.70:FF:000049">
    <property type="entry name" value="Thiazole synthase"/>
    <property type="match status" value="1"/>
</dbReference>
<dbReference type="Gene3D" id="3.20.20.70">
    <property type="entry name" value="Aldolase class I"/>
    <property type="match status" value="1"/>
</dbReference>
<dbReference type="HAMAP" id="MF_00443">
    <property type="entry name" value="ThiG"/>
    <property type="match status" value="1"/>
</dbReference>
<dbReference type="InterPro" id="IPR013785">
    <property type="entry name" value="Aldolase_TIM"/>
</dbReference>
<dbReference type="InterPro" id="IPR033983">
    <property type="entry name" value="Thiazole_synthase_ThiG"/>
</dbReference>
<dbReference type="InterPro" id="IPR008867">
    <property type="entry name" value="ThiG"/>
</dbReference>
<dbReference type="PANTHER" id="PTHR34266">
    <property type="entry name" value="THIAZOLE SYNTHASE"/>
    <property type="match status" value="1"/>
</dbReference>
<dbReference type="PANTHER" id="PTHR34266:SF2">
    <property type="entry name" value="THIAZOLE SYNTHASE"/>
    <property type="match status" value="1"/>
</dbReference>
<dbReference type="Pfam" id="PF05690">
    <property type="entry name" value="ThiG"/>
    <property type="match status" value="1"/>
</dbReference>
<dbReference type="SUPFAM" id="SSF110399">
    <property type="entry name" value="ThiG-like"/>
    <property type="match status" value="1"/>
</dbReference>
<evidence type="ECO:0000255" key="1">
    <source>
        <dbReference type="HAMAP-Rule" id="MF_00443"/>
    </source>
</evidence>
<organism>
    <name type="scientific">Escherichia coli O8 (strain IAI1)</name>
    <dbReference type="NCBI Taxonomy" id="585034"/>
    <lineage>
        <taxon>Bacteria</taxon>
        <taxon>Pseudomonadati</taxon>
        <taxon>Pseudomonadota</taxon>
        <taxon>Gammaproteobacteria</taxon>
        <taxon>Enterobacterales</taxon>
        <taxon>Enterobacteriaceae</taxon>
        <taxon>Escherichia</taxon>
    </lineage>
</organism>
<gene>
    <name evidence="1" type="primary">thiG</name>
    <name type="ordered locus">ECIAI1_4205</name>
</gene>
<comment type="function">
    <text evidence="1">Catalyzes the rearrangement of 1-deoxy-D-xylulose 5-phosphate (DXP) to produce the thiazole phosphate moiety of thiamine. Sulfur is provided by the thiocarboxylate moiety of the carrier protein ThiS. In vitro, sulfur can be provided by H(2)S.</text>
</comment>
<comment type="catalytic activity">
    <reaction evidence="1">
        <text>[ThiS sulfur-carrier protein]-C-terminal-Gly-aminoethanethioate + 2-iminoacetate + 1-deoxy-D-xylulose 5-phosphate = [ThiS sulfur-carrier protein]-C-terminal Gly-Gly + 2-[(2R,5Z)-2-carboxy-4-methylthiazol-5(2H)-ylidene]ethyl phosphate + 2 H2O + H(+)</text>
        <dbReference type="Rhea" id="RHEA:26297"/>
        <dbReference type="Rhea" id="RHEA-COMP:12909"/>
        <dbReference type="Rhea" id="RHEA-COMP:19908"/>
        <dbReference type="ChEBI" id="CHEBI:15377"/>
        <dbReference type="ChEBI" id="CHEBI:15378"/>
        <dbReference type="ChEBI" id="CHEBI:57792"/>
        <dbReference type="ChEBI" id="CHEBI:62899"/>
        <dbReference type="ChEBI" id="CHEBI:77846"/>
        <dbReference type="ChEBI" id="CHEBI:90778"/>
        <dbReference type="ChEBI" id="CHEBI:232372"/>
        <dbReference type="EC" id="2.8.1.10"/>
    </reaction>
</comment>
<comment type="pathway">
    <text evidence="1">Cofactor biosynthesis; thiamine diphosphate biosynthesis.</text>
</comment>
<comment type="subunit">
    <text evidence="1">Homotetramer. Forms heterodimers with either ThiH or ThiS.</text>
</comment>
<comment type="subcellular location">
    <subcellularLocation>
        <location evidence="1">Cytoplasm</location>
    </subcellularLocation>
</comment>
<comment type="similarity">
    <text evidence="1">Belongs to the ThiG family.</text>
</comment>
<keyword id="KW-0963">Cytoplasm</keyword>
<keyword id="KW-0704">Schiff base</keyword>
<keyword id="KW-0784">Thiamine biosynthesis</keyword>
<keyword id="KW-0808">Transferase</keyword>
<feature type="chain" id="PRO_1000196861" description="Thiazole synthase">
    <location>
        <begin position="1"/>
        <end position="256"/>
    </location>
</feature>
<feature type="active site" description="Schiff-base intermediate with DXP" evidence="1">
    <location>
        <position position="95"/>
    </location>
</feature>
<feature type="binding site" evidence="1">
    <location>
        <position position="156"/>
    </location>
    <ligand>
        <name>1-deoxy-D-xylulose 5-phosphate</name>
        <dbReference type="ChEBI" id="CHEBI:57792"/>
    </ligand>
</feature>
<feature type="binding site" evidence="1">
    <location>
        <begin position="182"/>
        <end position="183"/>
    </location>
    <ligand>
        <name>1-deoxy-D-xylulose 5-phosphate</name>
        <dbReference type="ChEBI" id="CHEBI:57792"/>
    </ligand>
</feature>
<feature type="binding site" evidence="1">
    <location>
        <begin position="204"/>
        <end position="205"/>
    </location>
    <ligand>
        <name>1-deoxy-D-xylulose 5-phosphate</name>
        <dbReference type="ChEBI" id="CHEBI:57792"/>
    </ligand>
</feature>
<protein>
    <recommendedName>
        <fullName evidence="1">Thiazole synthase</fullName>
        <ecNumber evidence="1">2.8.1.10</ecNumber>
    </recommendedName>
</protein>